<organism>
    <name type="scientific">Herpetosiphon aurantiacus (strain ATCC 23779 / DSM 785 / 114-95)</name>
    <dbReference type="NCBI Taxonomy" id="316274"/>
    <lineage>
        <taxon>Bacteria</taxon>
        <taxon>Bacillati</taxon>
        <taxon>Chloroflexota</taxon>
        <taxon>Chloroflexia</taxon>
        <taxon>Herpetosiphonales</taxon>
        <taxon>Herpetosiphonaceae</taxon>
        <taxon>Herpetosiphon</taxon>
    </lineage>
</organism>
<accession>A9AZP9</accession>
<evidence type="ECO:0000255" key="1">
    <source>
        <dbReference type="HAMAP-Rule" id="MF_01576"/>
    </source>
</evidence>
<feature type="chain" id="PRO_1000196783" description="Bifunctional protein FolD">
    <location>
        <begin position="1"/>
        <end position="286"/>
    </location>
</feature>
<feature type="binding site" evidence="1">
    <location>
        <begin position="166"/>
        <end position="168"/>
    </location>
    <ligand>
        <name>NADP(+)</name>
        <dbReference type="ChEBI" id="CHEBI:58349"/>
    </ligand>
</feature>
<feature type="binding site" evidence="1">
    <location>
        <position position="191"/>
    </location>
    <ligand>
        <name>NADP(+)</name>
        <dbReference type="ChEBI" id="CHEBI:58349"/>
    </ligand>
</feature>
<feature type="binding site" evidence="1">
    <location>
        <position position="232"/>
    </location>
    <ligand>
        <name>NADP(+)</name>
        <dbReference type="ChEBI" id="CHEBI:58349"/>
    </ligand>
</feature>
<dbReference type="EC" id="1.5.1.5" evidence="1"/>
<dbReference type="EC" id="3.5.4.9" evidence="1"/>
<dbReference type="EMBL" id="CP000875">
    <property type="protein sequence ID" value="ABX07103.1"/>
    <property type="molecule type" value="Genomic_DNA"/>
</dbReference>
<dbReference type="SMR" id="A9AZP9"/>
<dbReference type="FunCoup" id="A9AZP9">
    <property type="interactions" value="411"/>
</dbReference>
<dbReference type="STRING" id="316274.Haur_4471"/>
<dbReference type="KEGG" id="hau:Haur_4471"/>
<dbReference type="eggNOG" id="COG0190">
    <property type="taxonomic scope" value="Bacteria"/>
</dbReference>
<dbReference type="HOGENOM" id="CLU_034045_2_1_0"/>
<dbReference type="InParanoid" id="A9AZP9"/>
<dbReference type="UniPathway" id="UPA00193"/>
<dbReference type="Proteomes" id="UP000000787">
    <property type="component" value="Chromosome"/>
</dbReference>
<dbReference type="GO" id="GO:0005829">
    <property type="term" value="C:cytosol"/>
    <property type="evidence" value="ECO:0007669"/>
    <property type="project" value="TreeGrafter"/>
</dbReference>
<dbReference type="GO" id="GO:0004477">
    <property type="term" value="F:methenyltetrahydrofolate cyclohydrolase activity"/>
    <property type="evidence" value="ECO:0007669"/>
    <property type="project" value="UniProtKB-UniRule"/>
</dbReference>
<dbReference type="GO" id="GO:0004488">
    <property type="term" value="F:methylenetetrahydrofolate dehydrogenase (NADP+) activity"/>
    <property type="evidence" value="ECO:0007669"/>
    <property type="project" value="UniProtKB-UniRule"/>
</dbReference>
<dbReference type="GO" id="GO:0000105">
    <property type="term" value="P:L-histidine biosynthetic process"/>
    <property type="evidence" value="ECO:0007669"/>
    <property type="project" value="UniProtKB-KW"/>
</dbReference>
<dbReference type="GO" id="GO:0009086">
    <property type="term" value="P:methionine biosynthetic process"/>
    <property type="evidence" value="ECO:0007669"/>
    <property type="project" value="UniProtKB-KW"/>
</dbReference>
<dbReference type="GO" id="GO:0006164">
    <property type="term" value="P:purine nucleotide biosynthetic process"/>
    <property type="evidence" value="ECO:0007669"/>
    <property type="project" value="UniProtKB-KW"/>
</dbReference>
<dbReference type="GO" id="GO:0035999">
    <property type="term" value="P:tetrahydrofolate interconversion"/>
    <property type="evidence" value="ECO:0007669"/>
    <property type="project" value="UniProtKB-UniRule"/>
</dbReference>
<dbReference type="CDD" id="cd01080">
    <property type="entry name" value="NAD_bind_m-THF_DH_Cyclohyd"/>
    <property type="match status" value="1"/>
</dbReference>
<dbReference type="FunFam" id="3.40.50.720:FF:000094">
    <property type="entry name" value="Bifunctional protein FolD"/>
    <property type="match status" value="1"/>
</dbReference>
<dbReference type="FunFam" id="3.40.50.10860:FF:000005">
    <property type="entry name" value="C-1-tetrahydrofolate synthase, cytoplasmic, putative"/>
    <property type="match status" value="1"/>
</dbReference>
<dbReference type="Gene3D" id="3.40.50.10860">
    <property type="entry name" value="Leucine Dehydrogenase, chain A, domain 1"/>
    <property type="match status" value="1"/>
</dbReference>
<dbReference type="Gene3D" id="3.40.50.720">
    <property type="entry name" value="NAD(P)-binding Rossmann-like Domain"/>
    <property type="match status" value="1"/>
</dbReference>
<dbReference type="HAMAP" id="MF_01576">
    <property type="entry name" value="THF_DHG_CYH"/>
    <property type="match status" value="1"/>
</dbReference>
<dbReference type="InterPro" id="IPR046346">
    <property type="entry name" value="Aminoacid_DH-like_N_sf"/>
</dbReference>
<dbReference type="InterPro" id="IPR036291">
    <property type="entry name" value="NAD(P)-bd_dom_sf"/>
</dbReference>
<dbReference type="InterPro" id="IPR000672">
    <property type="entry name" value="THF_DH/CycHdrlase"/>
</dbReference>
<dbReference type="InterPro" id="IPR020630">
    <property type="entry name" value="THF_DH/CycHdrlase_cat_dom"/>
</dbReference>
<dbReference type="InterPro" id="IPR020631">
    <property type="entry name" value="THF_DH/CycHdrlase_NAD-bd_dom"/>
</dbReference>
<dbReference type="PANTHER" id="PTHR48099:SF5">
    <property type="entry name" value="C-1-TETRAHYDROFOLATE SYNTHASE, CYTOPLASMIC"/>
    <property type="match status" value="1"/>
</dbReference>
<dbReference type="PANTHER" id="PTHR48099">
    <property type="entry name" value="C-1-TETRAHYDROFOLATE SYNTHASE, CYTOPLASMIC-RELATED"/>
    <property type="match status" value="1"/>
</dbReference>
<dbReference type="Pfam" id="PF00763">
    <property type="entry name" value="THF_DHG_CYH"/>
    <property type="match status" value="1"/>
</dbReference>
<dbReference type="Pfam" id="PF02882">
    <property type="entry name" value="THF_DHG_CYH_C"/>
    <property type="match status" value="1"/>
</dbReference>
<dbReference type="PRINTS" id="PR00085">
    <property type="entry name" value="THFDHDRGNASE"/>
</dbReference>
<dbReference type="SUPFAM" id="SSF53223">
    <property type="entry name" value="Aminoacid dehydrogenase-like, N-terminal domain"/>
    <property type="match status" value="1"/>
</dbReference>
<dbReference type="SUPFAM" id="SSF51735">
    <property type="entry name" value="NAD(P)-binding Rossmann-fold domains"/>
    <property type="match status" value="1"/>
</dbReference>
<reference key="1">
    <citation type="journal article" date="2011" name="Stand. Genomic Sci.">
        <title>Complete genome sequence of the filamentous gliding predatory bacterium Herpetosiphon aurantiacus type strain (114-95(T)).</title>
        <authorList>
            <person name="Kiss H."/>
            <person name="Nett M."/>
            <person name="Domin N."/>
            <person name="Martin K."/>
            <person name="Maresca J.A."/>
            <person name="Copeland A."/>
            <person name="Lapidus A."/>
            <person name="Lucas S."/>
            <person name="Berry K.W."/>
            <person name="Glavina Del Rio T."/>
            <person name="Dalin E."/>
            <person name="Tice H."/>
            <person name="Pitluck S."/>
            <person name="Richardson P."/>
            <person name="Bruce D."/>
            <person name="Goodwin L."/>
            <person name="Han C."/>
            <person name="Detter J.C."/>
            <person name="Schmutz J."/>
            <person name="Brettin T."/>
            <person name="Land M."/>
            <person name="Hauser L."/>
            <person name="Kyrpides N.C."/>
            <person name="Ivanova N."/>
            <person name="Goeker M."/>
            <person name="Woyke T."/>
            <person name="Klenk H.P."/>
            <person name="Bryant D.A."/>
        </authorList>
    </citation>
    <scope>NUCLEOTIDE SEQUENCE [LARGE SCALE GENOMIC DNA]</scope>
    <source>
        <strain>ATCC 23779 / DSM 785 / 114-95</strain>
    </source>
</reference>
<proteinExistence type="inferred from homology"/>
<comment type="function">
    <text evidence="1">Catalyzes the oxidation of 5,10-methylenetetrahydrofolate to 5,10-methenyltetrahydrofolate and then the hydrolysis of 5,10-methenyltetrahydrofolate to 10-formyltetrahydrofolate.</text>
</comment>
<comment type="catalytic activity">
    <reaction evidence="1">
        <text>(6R)-5,10-methylene-5,6,7,8-tetrahydrofolate + NADP(+) = (6R)-5,10-methenyltetrahydrofolate + NADPH</text>
        <dbReference type="Rhea" id="RHEA:22812"/>
        <dbReference type="ChEBI" id="CHEBI:15636"/>
        <dbReference type="ChEBI" id="CHEBI:57455"/>
        <dbReference type="ChEBI" id="CHEBI:57783"/>
        <dbReference type="ChEBI" id="CHEBI:58349"/>
        <dbReference type="EC" id="1.5.1.5"/>
    </reaction>
</comment>
<comment type="catalytic activity">
    <reaction evidence="1">
        <text>(6R)-5,10-methenyltetrahydrofolate + H2O = (6R)-10-formyltetrahydrofolate + H(+)</text>
        <dbReference type="Rhea" id="RHEA:23700"/>
        <dbReference type="ChEBI" id="CHEBI:15377"/>
        <dbReference type="ChEBI" id="CHEBI:15378"/>
        <dbReference type="ChEBI" id="CHEBI:57455"/>
        <dbReference type="ChEBI" id="CHEBI:195366"/>
        <dbReference type="EC" id="3.5.4.9"/>
    </reaction>
</comment>
<comment type="pathway">
    <text evidence="1">One-carbon metabolism; tetrahydrofolate interconversion.</text>
</comment>
<comment type="subunit">
    <text evidence="1">Homodimer.</text>
</comment>
<comment type="similarity">
    <text evidence="1">Belongs to the tetrahydrofolate dehydrogenase/cyclohydrolase family.</text>
</comment>
<gene>
    <name evidence="1" type="primary">folD</name>
    <name type="ordered locus">Haur_4471</name>
</gene>
<keyword id="KW-0028">Amino-acid biosynthesis</keyword>
<keyword id="KW-0368">Histidine biosynthesis</keyword>
<keyword id="KW-0378">Hydrolase</keyword>
<keyword id="KW-0486">Methionine biosynthesis</keyword>
<keyword id="KW-0511">Multifunctional enzyme</keyword>
<keyword id="KW-0521">NADP</keyword>
<keyword id="KW-0554">One-carbon metabolism</keyword>
<keyword id="KW-0560">Oxidoreductase</keyword>
<keyword id="KW-0658">Purine biosynthesis</keyword>
<sequence length="286" mass="29569">MTALLLDGRGLAKELKAQISQQGAEFKARTGYAPQLVVIQVAGNAASDWYVRSIRRSCEGVGFGFALQRLPETSDQATLEAAIQQASNDPAIHGIIIQMPLPSQLSADGAVAALNPQKDVDGLHPTNAGRLAQGLTALVPNTPAGGMALLDRYQINLAGKHAVVVGRSNVVGKPLAQLLLARHATVTICHSRTANLAEVIRQGDIVAAAVGKAGLVTGEMLKPGAVVLDFGINEVAEGQVVGDVDWESASKVASAITPVPGGTGPVTNMMLLQNTLQAAQSLAEQA</sequence>
<name>FOLD_HERA2</name>
<protein>
    <recommendedName>
        <fullName evidence="1">Bifunctional protein FolD</fullName>
    </recommendedName>
    <domain>
        <recommendedName>
            <fullName evidence="1">Methylenetetrahydrofolate dehydrogenase</fullName>
            <ecNumber evidence="1">1.5.1.5</ecNumber>
        </recommendedName>
    </domain>
    <domain>
        <recommendedName>
            <fullName evidence="1">Methenyltetrahydrofolate cyclohydrolase</fullName>
            <ecNumber evidence="1">3.5.4.9</ecNumber>
        </recommendedName>
    </domain>
</protein>